<evidence type="ECO:0000255" key="1">
    <source>
        <dbReference type="HAMAP-Rule" id="MF_00661"/>
    </source>
</evidence>
<evidence type="ECO:0000256" key="2">
    <source>
        <dbReference type="SAM" id="MobiDB-lite"/>
    </source>
</evidence>
<accession>Q1CBQ4</accession>
<dbReference type="EC" id="3.6.4.13" evidence="1"/>
<dbReference type="EMBL" id="CP000308">
    <property type="protein sequence ID" value="ABG12118.1"/>
    <property type="molecule type" value="Genomic_DNA"/>
</dbReference>
<dbReference type="RefSeq" id="WP_002228177.1">
    <property type="nucleotide sequence ID" value="NZ_CP009906.1"/>
</dbReference>
<dbReference type="SMR" id="Q1CBQ4"/>
<dbReference type="GeneID" id="96663646"/>
<dbReference type="KEGG" id="ypa:YPA_0149"/>
<dbReference type="Proteomes" id="UP000001971">
    <property type="component" value="Chromosome"/>
</dbReference>
<dbReference type="GO" id="GO:0005829">
    <property type="term" value="C:cytosol"/>
    <property type="evidence" value="ECO:0007669"/>
    <property type="project" value="TreeGrafter"/>
</dbReference>
<dbReference type="GO" id="GO:0005524">
    <property type="term" value="F:ATP binding"/>
    <property type="evidence" value="ECO:0007669"/>
    <property type="project" value="UniProtKB-UniRule"/>
</dbReference>
<dbReference type="GO" id="GO:0016887">
    <property type="term" value="F:ATP hydrolysis activity"/>
    <property type="evidence" value="ECO:0007669"/>
    <property type="project" value="RHEA"/>
</dbReference>
<dbReference type="GO" id="GO:0003723">
    <property type="term" value="F:RNA binding"/>
    <property type="evidence" value="ECO:0007669"/>
    <property type="project" value="UniProtKB-UniRule"/>
</dbReference>
<dbReference type="GO" id="GO:0003724">
    <property type="term" value="F:RNA helicase activity"/>
    <property type="evidence" value="ECO:0007669"/>
    <property type="project" value="UniProtKB-UniRule"/>
</dbReference>
<dbReference type="GO" id="GO:0006401">
    <property type="term" value="P:RNA catabolic process"/>
    <property type="evidence" value="ECO:0007669"/>
    <property type="project" value="UniProtKB-UniRule"/>
</dbReference>
<dbReference type="CDD" id="cd00268">
    <property type="entry name" value="DEADc"/>
    <property type="match status" value="1"/>
</dbReference>
<dbReference type="CDD" id="cd18787">
    <property type="entry name" value="SF2_C_DEAD"/>
    <property type="match status" value="1"/>
</dbReference>
<dbReference type="FunFam" id="3.40.50.300:FF:000312">
    <property type="entry name" value="ATP-dependent RNA helicase RhlB"/>
    <property type="match status" value="1"/>
</dbReference>
<dbReference type="Gene3D" id="3.40.50.300">
    <property type="entry name" value="P-loop containing nucleotide triphosphate hydrolases"/>
    <property type="match status" value="2"/>
</dbReference>
<dbReference type="HAMAP" id="MF_00661">
    <property type="entry name" value="DEAD_helicase_RhlB"/>
    <property type="match status" value="1"/>
</dbReference>
<dbReference type="InterPro" id="IPR011545">
    <property type="entry name" value="DEAD/DEAH_box_helicase_dom"/>
</dbReference>
<dbReference type="InterPro" id="IPR050079">
    <property type="entry name" value="DEAD_box_RNA_helicase"/>
</dbReference>
<dbReference type="InterPro" id="IPR014001">
    <property type="entry name" value="Helicase_ATP-bd"/>
</dbReference>
<dbReference type="InterPro" id="IPR001650">
    <property type="entry name" value="Helicase_C-like"/>
</dbReference>
<dbReference type="InterPro" id="IPR027417">
    <property type="entry name" value="P-loop_NTPase"/>
</dbReference>
<dbReference type="InterPro" id="IPR000629">
    <property type="entry name" value="RNA-helicase_DEAD-box_CS"/>
</dbReference>
<dbReference type="InterPro" id="IPR023554">
    <property type="entry name" value="RNA_helicase_ATP-dep_RhlB"/>
</dbReference>
<dbReference type="InterPro" id="IPR014014">
    <property type="entry name" value="RNA_helicase_DEAD_Q_motif"/>
</dbReference>
<dbReference type="NCBIfam" id="NF003419">
    <property type="entry name" value="PRK04837.1"/>
    <property type="match status" value="1"/>
</dbReference>
<dbReference type="PANTHER" id="PTHR47959:SF10">
    <property type="entry name" value="ATP-DEPENDENT RNA HELICASE RHLB"/>
    <property type="match status" value="1"/>
</dbReference>
<dbReference type="PANTHER" id="PTHR47959">
    <property type="entry name" value="ATP-DEPENDENT RNA HELICASE RHLE-RELATED"/>
    <property type="match status" value="1"/>
</dbReference>
<dbReference type="Pfam" id="PF00270">
    <property type="entry name" value="DEAD"/>
    <property type="match status" value="1"/>
</dbReference>
<dbReference type="Pfam" id="PF00271">
    <property type="entry name" value="Helicase_C"/>
    <property type="match status" value="1"/>
</dbReference>
<dbReference type="SMART" id="SM00487">
    <property type="entry name" value="DEXDc"/>
    <property type="match status" value="1"/>
</dbReference>
<dbReference type="SMART" id="SM00490">
    <property type="entry name" value="HELICc"/>
    <property type="match status" value="1"/>
</dbReference>
<dbReference type="SUPFAM" id="SSF52540">
    <property type="entry name" value="P-loop containing nucleoside triphosphate hydrolases"/>
    <property type="match status" value="1"/>
</dbReference>
<dbReference type="PROSITE" id="PS00039">
    <property type="entry name" value="DEAD_ATP_HELICASE"/>
    <property type="match status" value="1"/>
</dbReference>
<dbReference type="PROSITE" id="PS51192">
    <property type="entry name" value="HELICASE_ATP_BIND_1"/>
    <property type="match status" value="1"/>
</dbReference>
<dbReference type="PROSITE" id="PS51194">
    <property type="entry name" value="HELICASE_CTER"/>
    <property type="match status" value="1"/>
</dbReference>
<dbReference type="PROSITE" id="PS51195">
    <property type="entry name" value="Q_MOTIF"/>
    <property type="match status" value="1"/>
</dbReference>
<protein>
    <recommendedName>
        <fullName evidence="1">ATP-dependent RNA helicase RhlB</fullName>
        <ecNumber evidence="1">3.6.4.13</ecNumber>
    </recommendedName>
</protein>
<name>RHLB_YERPA</name>
<proteinExistence type="inferred from homology"/>
<keyword id="KW-0067">ATP-binding</keyword>
<keyword id="KW-0963">Cytoplasm</keyword>
<keyword id="KW-0347">Helicase</keyword>
<keyword id="KW-0378">Hydrolase</keyword>
<keyword id="KW-0547">Nucleotide-binding</keyword>
<keyword id="KW-0694">RNA-binding</keyword>
<gene>
    <name evidence="1" type="primary">rhlB</name>
    <name type="ordered locus">YPA_0149</name>
</gene>
<sequence>MSKTHLTEQKFSDFALHPLVVEALENKGFQYCTPIQALALPLTLSGRDVAGQAQTGTGKTLAFLASTFHYLLSHPAEEGRQTNQPRALIMAPTRELAVQIHSDAESLSQVTGLKLGLAYGGDGYDKQLKVLESGVDILIGTTGRLIDYAKQNYINLGAIQVVVLDEADRMYDLGFIKDIRWLFRRMPSVDKRLNMLFSATLSYRVRELAFEQMNNAEYVEVEPLQKTGHRIKEELFYPSNEEKMRLLQTLIEEEWPDRCIIFANTKHRCEEIWGHLAADGHRVGLLTGDVAQKKRLRILEDFTKGDLDILVATDVAARGLHIPLVTHVFNYDLPDDCEDYVHRIGRTGRAGESGHSISLACEEYALNLPAIETYTGHSIPVSKYNSDALLTDLPAPKRLARTRTGNGPRRNSAPRRSGAPRNNRKRPG</sequence>
<reference key="1">
    <citation type="journal article" date="2006" name="J. Bacteriol.">
        <title>Complete genome sequence of Yersinia pestis strains Antiqua and Nepal516: evidence of gene reduction in an emerging pathogen.</title>
        <authorList>
            <person name="Chain P.S.G."/>
            <person name="Hu P."/>
            <person name="Malfatti S.A."/>
            <person name="Radnedge L."/>
            <person name="Larimer F."/>
            <person name="Vergez L.M."/>
            <person name="Worsham P."/>
            <person name="Chu M.C."/>
            <person name="Andersen G.L."/>
        </authorList>
    </citation>
    <scope>NUCLEOTIDE SEQUENCE [LARGE SCALE GENOMIC DNA]</scope>
    <source>
        <strain>Antiqua</strain>
    </source>
</reference>
<comment type="function">
    <text evidence="1">DEAD-box RNA helicase involved in RNA degradation. Has RNA-dependent ATPase activity and unwinds double-stranded RNA.</text>
</comment>
<comment type="catalytic activity">
    <reaction evidence="1">
        <text>ATP + H2O = ADP + phosphate + H(+)</text>
        <dbReference type="Rhea" id="RHEA:13065"/>
        <dbReference type="ChEBI" id="CHEBI:15377"/>
        <dbReference type="ChEBI" id="CHEBI:15378"/>
        <dbReference type="ChEBI" id="CHEBI:30616"/>
        <dbReference type="ChEBI" id="CHEBI:43474"/>
        <dbReference type="ChEBI" id="CHEBI:456216"/>
        <dbReference type="EC" id="3.6.4.13"/>
    </reaction>
</comment>
<comment type="subunit">
    <text evidence="1">Component of the RNA degradosome, which is a multiprotein complex involved in RNA processing and mRNA degradation.</text>
</comment>
<comment type="subcellular location">
    <subcellularLocation>
        <location evidence="1">Cytoplasm</location>
    </subcellularLocation>
</comment>
<comment type="similarity">
    <text evidence="1">Belongs to the DEAD box helicase family. RhlB subfamily.</text>
</comment>
<feature type="chain" id="PRO_1000082881" description="ATP-dependent RNA helicase RhlB">
    <location>
        <begin position="1"/>
        <end position="428"/>
    </location>
</feature>
<feature type="domain" description="Helicase ATP-binding" evidence="1">
    <location>
        <begin position="40"/>
        <end position="219"/>
    </location>
</feature>
<feature type="domain" description="Helicase C-terminal" evidence="1">
    <location>
        <begin position="245"/>
        <end position="390"/>
    </location>
</feature>
<feature type="region of interest" description="Disordered" evidence="2">
    <location>
        <begin position="394"/>
        <end position="428"/>
    </location>
</feature>
<feature type="short sequence motif" description="Q motif">
    <location>
        <begin position="9"/>
        <end position="37"/>
    </location>
</feature>
<feature type="short sequence motif" description="DEAD box">
    <location>
        <begin position="165"/>
        <end position="168"/>
    </location>
</feature>
<feature type="binding site" evidence="1">
    <location>
        <begin position="53"/>
        <end position="60"/>
    </location>
    <ligand>
        <name>ATP</name>
        <dbReference type="ChEBI" id="CHEBI:30616"/>
    </ligand>
</feature>
<organism>
    <name type="scientific">Yersinia pestis bv. Antiqua (strain Antiqua)</name>
    <dbReference type="NCBI Taxonomy" id="360102"/>
    <lineage>
        <taxon>Bacteria</taxon>
        <taxon>Pseudomonadati</taxon>
        <taxon>Pseudomonadota</taxon>
        <taxon>Gammaproteobacteria</taxon>
        <taxon>Enterobacterales</taxon>
        <taxon>Yersiniaceae</taxon>
        <taxon>Yersinia</taxon>
    </lineage>
</organism>